<sequence length="352" mass="38440">MTELELLGPRASGEPLGTAILKAVAEDFQVDEVLDIPLSGQGEHLWLWVEKRDLNTEEAARRLARAAGVPVRSISYAGLKDRQALTRQWFSLHLPGKADPDLSRAEDASLRVLKQVRHQRKLQRGAHSANGFTLRLTALAADHQAVDARLEQLRQQGVPNYFGTQRFGHGGGNVHDALDWAARKALPEQRNVRSRLLSAGRSYLFNQLLAARVADGSWARAQVGDLLAFTDSRSFFPAGEAECADPRLAILDLHPTGPMWGEGASPAGGAPAQLENAIGARQPALCQWLAQAGMDHERRILRLPIGGLTWHYPEPDILQLEFVLPAGCFATVVVREVVDLVSAGQTDSPCVF</sequence>
<organism>
    <name type="scientific">Pseudomonas putida (strain ATCC 47054 / DSM 6125 / CFBP 8728 / NCIMB 11950 / KT2440)</name>
    <dbReference type="NCBI Taxonomy" id="160488"/>
    <lineage>
        <taxon>Bacteria</taxon>
        <taxon>Pseudomonadati</taxon>
        <taxon>Pseudomonadota</taxon>
        <taxon>Gammaproteobacteria</taxon>
        <taxon>Pseudomonadales</taxon>
        <taxon>Pseudomonadaceae</taxon>
        <taxon>Pseudomonas</taxon>
    </lineage>
</organism>
<keyword id="KW-0413">Isomerase</keyword>
<keyword id="KW-1185">Reference proteome</keyword>
<keyword id="KW-0819">tRNA processing</keyword>
<name>TRUD_PSEPK</name>
<accession>Q88MF2</accession>
<protein>
    <recommendedName>
        <fullName evidence="1">tRNA pseudouridine synthase D</fullName>
        <ecNumber evidence="1">5.4.99.27</ecNumber>
    </recommendedName>
    <alternativeName>
        <fullName evidence="1">tRNA pseudouridine(13) synthase</fullName>
    </alternativeName>
    <alternativeName>
        <fullName evidence="1">tRNA pseudouridylate synthase D</fullName>
    </alternativeName>
    <alternativeName>
        <fullName evidence="1">tRNA-uridine isomerase D</fullName>
    </alternativeName>
</protein>
<feature type="chain" id="PRO_0000152516" description="tRNA pseudouridine synthase D">
    <location>
        <begin position="1"/>
        <end position="352"/>
    </location>
</feature>
<feature type="domain" description="TRUD" evidence="1">
    <location>
        <begin position="157"/>
        <end position="303"/>
    </location>
</feature>
<feature type="active site" description="Nucleophile" evidence="1">
    <location>
        <position position="81"/>
    </location>
</feature>
<proteinExistence type="inferred from homology"/>
<reference key="1">
    <citation type="journal article" date="2002" name="Environ. Microbiol.">
        <title>Complete genome sequence and comparative analysis of the metabolically versatile Pseudomonas putida KT2440.</title>
        <authorList>
            <person name="Nelson K.E."/>
            <person name="Weinel C."/>
            <person name="Paulsen I.T."/>
            <person name="Dodson R.J."/>
            <person name="Hilbert H."/>
            <person name="Martins dos Santos V.A.P."/>
            <person name="Fouts D.E."/>
            <person name="Gill S.R."/>
            <person name="Pop M."/>
            <person name="Holmes M."/>
            <person name="Brinkac L.M."/>
            <person name="Beanan M.J."/>
            <person name="DeBoy R.T."/>
            <person name="Daugherty S.C."/>
            <person name="Kolonay J.F."/>
            <person name="Madupu R."/>
            <person name="Nelson W.C."/>
            <person name="White O."/>
            <person name="Peterson J.D."/>
            <person name="Khouri H.M."/>
            <person name="Hance I."/>
            <person name="Chris Lee P."/>
            <person name="Holtzapple E.K."/>
            <person name="Scanlan D."/>
            <person name="Tran K."/>
            <person name="Moazzez A."/>
            <person name="Utterback T.R."/>
            <person name="Rizzo M."/>
            <person name="Lee K."/>
            <person name="Kosack D."/>
            <person name="Moestl D."/>
            <person name="Wedler H."/>
            <person name="Lauber J."/>
            <person name="Stjepandic D."/>
            <person name="Hoheisel J."/>
            <person name="Straetz M."/>
            <person name="Heim S."/>
            <person name="Kiewitz C."/>
            <person name="Eisen J.A."/>
            <person name="Timmis K.N."/>
            <person name="Duesterhoeft A."/>
            <person name="Tuemmler B."/>
            <person name="Fraser C.M."/>
        </authorList>
    </citation>
    <scope>NUCLEOTIDE SEQUENCE [LARGE SCALE GENOMIC DNA]</scope>
    <source>
        <strain>ATCC 47054 / DSM 6125 / CFBP 8728 / NCIMB 11950 / KT2440</strain>
    </source>
</reference>
<comment type="function">
    <text evidence="1">Responsible for synthesis of pseudouridine from uracil-13 in transfer RNAs.</text>
</comment>
<comment type="catalytic activity">
    <reaction evidence="1">
        <text>uridine(13) in tRNA = pseudouridine(13) in tRNA</text>
        <dbReference type="Rhea" id="RHEA:42540"/>
        <dbReference type="Rhea" id="RHEA-COMP:10105"/>
        <dbReference type="Rhea" id="RHEA-COMP:10106"/>
        <dbReference type="ChEBI" id="CHEBI:65314"/>
        <dbReference type="ChEBI" id="CHEBI:65315"/>
        <dbReference type="EC" id="5.4.99.27"/>
    </reaction>
</comment>
<comment type="similarity">
    <text evidence="1">Belongs to the pseudouridine synthase TruD family.</text>
</comment>
<gene>
    <name evidence="1" type="primary">truD</name>
    <name type="ordered locus">PP_1619</name>
</gene>
<dbReference type="EC" id="5.4.99.27" evidence="1"/>
<dbReference type="EMBL" id="AE015451">
    <property type="protein sequence ID" value="AAN67240.1"/>
    <property type="molecule type" value="Genomic_DNA"/>
</dbReference>
<dbReference type="RefSeq" id="NP_743776.1">
    <property type="nucleotide sequence ID" value="NC_002947.4"/>
</dbReference>
<dbReference type="RefSeq" id="WP_010952689.1">
    <property type="nucleotide sequence ID" value="NZ_CP169744.1"/>
</dbReference>
<dbReference type="SMR" id="Q88MF2"/>
<dbReference type="STRING" id="160488.PP_1619"/>
<dbReference type="PaxDb" id="160488-PP_1619"/>
<dbReference type="GeneID" id="83681902"/>
<dbReference type="KEGG" id="ppu:PP_1619"/>
<dbReference type="PATRIC" id="fig|160488.4.peg.1710"/>
<dbReference type="eggNOG" id="COG0585">
    <property type="taxonomic scope" value="Bacteria"/>
</dbReference>
<dbReference type="HOGENOM" id="CLU_005281_4_0_6"/>
<dbReference type="OrthoDB" id="1550679at2"/>
<dbReference type="PhylomeDB" id="Q88MF2"/>
<dbReference type="BioCyc" id="PPUT160488:G1G01-1716-MONOMER"/>
<dbReference type="Proteomes" id="UP000000556">
    <property type="component" value="Chromosome"/>
</dbReference>
<dbReference type="GO" id="GO:0005829">
    <property type="term" value="C:cytosol"/>
    <property type="evidence" value="ECO:0007669"/>
    <property type="project" value="TreeGrafter"/>
</dbReference>
<dbReference type="GO" id="GO:0003723">
    <property type="term" value="F:RNA binding"/>
    <property type="evidence" value="ECO:0007669"/>
    <property type="project" value="InterPro"/>
</dbReference>
<dbReference type="GO" id="GO:0160150">
    <property type="term" value="F:tRNA pseudouridine(13) synthase activity"/>
    <property type="evidence" value="ECO:0007669"/>
    <property type="project" value="UniProtKB-EC"/>
</dbReference>
<dbReference type="GO" id="GO:0031119">
    <property type="term" value="P:tRNA pseudouridine synthesis"/>
    <property type="evidence" value="ECO:0007669"/>
    <property type="project" value="UniProtKB-UniRule"/>
</dbReference>
<dbReference type="CDD" id="cd02575">
    <property type="entry name" value="PseudoU_synth_EcTruD"/>
    <property type="match status" value="1"/>
</dbReference>
<dbReference type="Gene3D" id="3.30.2350.20">
    <property type="entry name" value="TruD, catalytic domain"/>
    <property type="match status" value="1"/>
</dbReference>
<dbReference type="Gene3D" id="3.30.2340.10">
    <property type="entry name" value="TruD, insertion domain"/>
    <property type="match status" value="1"/>
</dbReference>
<dbReference type="HAMAP" id="MF_01082">
    <property type="entry name" value="TruD"/>
    <property type="match status" value="1"/>
</dbReference>
<dbReference type="InterPro" id="IPR020103">
    <property type="entry name" value="PsdUridine_synth_cat_dom_sf"/>
</dbReference>
<dbReference type="InterPro" id="IPR001656">
    <property type="entry name" value="PsdUridine_synth_TruD"/>
</dbReference>
<dbReference type="InterPro" id="IPR020119">
    <property type="entry name" value="PsdUridine_synth_TruD_CS"/>
</dbReference>
<dbReference type="InterPro" id="IPR011760">
    <property type="entry name" value="PsdUridine_synth_TruD_insert"/>
</dbReference>
<dbReference type="InterPro" id="IPR042214">
    <property type="entry name" value="TruD_catalytic"/>
</dbReference>
<dbReference type="InterPro" id="IPR043165">
    <property type="entry name" value="TruD_insert_sf"/>
</dbReference>
<dbReference type="InterPro" id="IPR050170">
    <property type="entry name" value="TruD_pseudoU_synthase"/>
</dbReference>
<dbReference type="NCBIfam" id="NF002153">
    <property type="entry name" value="PRK00984.1-2"/>
    <property type="match status" value="1"/>
</dbReference>
<dbReference type="PANTHER" id="PTHR47811">
    <property type="entry name" value="TRNA PSEUDOURIDINE SYNTHASE D"/>
    <property type="match status" value="1"/>
</dbReference>
<dbReference type="PANTHER" id="PTHR47811:SF1">
    <property type="entry name" value="TRNA PSEUDOURIDINE SYNTHASE D"/>
    <property type="match status" value="1"/>
</dbReference>
<dbReference type="Pfam" id="PF01142">
    <property type="entry name" value="TruD"/>
    <property type="match status" value="2"/>
</dbReference>
<dbReference type="SUPFAM" id="SSF55120">
    <property type="entry name" value="Pseudouridine synthase"/>
    <property type="match status" value="1"/>
</dbReference>
<dbReference type="PROSITE" id="PS50984">
    <property type="entry name" value="TRUD"/>
    <property type="match status" value="1"/>
</dbReference>
<dbReference type="PROSITE" id="PS01268">
    <property type="entry name" value="UPF0024"/>
    <property type="match status" value="1"/>
</dbReference>
<evidence type="ECO:0000255" key="1">
    <source>
        <dbReference type="HAMAP-Rule" id="MF_01082"/>
    </source>
</evidence>